<protein>
    <recommendedName>
        <fullName evidence="1">GTP cyclohydrolase FolE2</fullName>
        <ecNumber evidence="1">3.5.4.16</ecNumber>
    </recommendedName>
</protein>
<feature type="chain" id="PRO_1000068669" description="GTP cyclohydrolase FolE2">
    <location>
        <begin position="1"/>
        <end position="359"/>
    </location>
</feature>
<feature type="site" description="May be catalytically important" evidence="1">
    <location>
        <position position="218"/>
    </location>
</feature>
<proteinExistence type="inferred from homology"/>
<gene>
    <name evidence="1" type="primary">folE2</name>
    <name type="ordered locus">Rsph17025_0639</name>
</gene>
<accession>A4WQ81</accession>
<dbReference type="EC" id="3.5.4.16" evidence="1"/>
<dbReference type="EMBL" id="CP000661">
    <property type="protein sequence ID" value="ABP69545.1"/>
    <property type="molecule type" value="Genomic_DNA"/>
</dbReference>
<dbReference type="SMR" id="A4WQ81"/>
<dbReference type="STRING" id="349102.Rsph17025_0639"/>
<dbReference type="KEGG" id="rsq:Rsph17025_0639"/>
<dbReference type="eggNOG" id="COG1469">
    <property type="taxonomic scope" value="Bacteria"/>
</dbReference>
<dbReference type="HOGENOM" id="CLU_062816_0_1_5"/>
<dbReference type="BioCyc" id="RSPH349102:G1G8M-660-MONOMER"/>
<dbReference type="UniPathway" id="UPA00848">
    <property type="reaction ID" value="UER00151"/>
</dbReference>
<dbReference type="GO" id="GO:0003934">
    <property type="term" value="F:GTP cyclohydrolase I activity"/>
    <property type="evidence" value="ECO:0007669"/>
    <property type="project" value="UniProtKB-UniRule"/>
</dbReference>
<dbReference type="GO" id="GO:0046654">
    <property type="term" value="P:tetrahydrofolate biosynthetic process"/>
    <property type="evidence" value="ECO:0007669"/>
    <property type="project" value="UniProtKB-UniRule"/>
</dbReference>
<dbReference type="Gene3D" id="3.10.270.10">
    <property type="entry name" value="Urate Oxidase"/>
    <property type="match status" value="1"/>
</dbReference>
<dbReference type="HAMAP" id="MF_01527_B">
    <property type="entry name" value="GTP_cyclohydrol_B"/>
    <property type="match status" value="1"/>
</dbReference>
<dbReference type="InterPro" id="IPR022838">
    <property type="entry name" value="GTP_cyclohydrolase_FolE2"/>
</dbReference>
<dbReference type="InterPro" id="IPR003801">
    <property type="entry name" value="GTP_cyclohydrolase_FolE2/MptA"/>
</dbReference>
<dbReference type="NCBIfam" id="NF010200">
    <property type="entry name" value="PRK13674.1-1"/>
    <property type="match status" value="1"/>
</dbReference>
<dbReference type="PANTHER" id="PTHR36445">
    <property type="entry name" value="GTP CYCLOHYDROLASE MPTA"/>
    <property type="match status" value="1"/>
</dbReference>
<dbReference type="PANTHER" id="PTHR36445:SF1">
    <property type="entry name" value="GTP CYCLOHYDROLASE MPTA"/>
    <property type="match status" value="1"/>
</dbReference>
<dbReference type="Pfam" id="PF02649">
    <property type="entry name" value="GCHY-1"/>
    <property type="match status" value="1"/>
</dbReference>
<comment type="function">
    <text evidence="1">Converts GTP to 7,8-dihydroneopterin triphosphate.</text>
</comment>
<comment type="catalytic activity">
    <reaction evidence="1">
        <text>GTP + H2O = 7,8-dihydroneopterin 3'-triphosphate + formate + H(+)</text>
        <dbReference type="Rhea" id="RHEA:17473"/>
        <dbReference type="ChEBI" id="CHEBI:15377"/>
        <dbReference type="ChEBI" id="CHEBI:15378"/>
        <dbReference type="ChEBI" id="CHEBI:15740"/>
        <dbReference type="ChEBI" id="CHEBI:37565"/>
        <dbReference type="ChEBI" id="CHEBI:58462"/>
        <dbReference type="EC" id="3.5.4.16"/>
    </reaction>
</comment>
<comment type="pathway">
    <text evidence="1">Cofactor biosynthesis; 7,8-dihydroneopterin triphosphate biosynthesis; 7,8-dihydroneopterin triphosphate from GTP: step 1/1.</text>
</comment>
<comment type="similarity">
    <text evidence="1">Belongs to the GTP cyclohydrolase IV family.</text>
</comment>
<keyword id="KW-0378">Hydrolase</keyword>
<sequence>MNILTPVADRLPSREEAEEALAVLRRWAKHTPVSDVAGLAPDVPALVYPEFSRSYPRNFTVDEAYKASLPDLQNGPASLIVGAKAVIQHVGISNFRLPIRYHTRDNGDLTLETSVTGTVSLEAEKKGINMSRIMRSFYAHAEQGFSFEVIERALEDYKRDLESFDARIQMRFSFPVKVPSLRSGLVGWQYYDIALELVDRGGVRKKIMHLDFVYSSTCPCSLELSEHARRERGQLATPHSQRSVARISVEVRPGKCLWFEDLIELARAAVPTETQVMVKREDEQAFAELNAANPIFVEDAARSFCQALQADPRIGDFRVVASHQESLHSHDAVSVLTEGPTFAAESLDPRLFASLYHTG</sequence>
<evidence type="ECO:0000255" key="1">
    <source>
        <dbReference type="HAMAP-Rule" id="MF_01527"/>
    </source>
</evidence>
<name>GCH4_CERS5</name>
<organism>
    <name type="scientific">Cereibacter sphaeroides (strain ATCC 17025 / ATH 2.4.3)</name>
    <name type="common">Rhodobacter sphaeroides</name>
    <dbReference type="NCBI Taxonomy" id="349102"/>
    <lineage>
        <taxon>Bacteria</taxon>
        <taxon>Pseudomonadati</taxon>
        <taxon>Pseudomonadota</taxon>
        <taxon>Alphaproteobacteria</taxon>
        <taxon>Rhodobacterales</taxon>
        <taxon>Paracoccaceae</taxon>
        <taxon>Cereibacter</taxon>
    </lineage>
</organism>
<reference key="1">
    <citation type="submission" date="2007-04" db="EMBL/GenBank/DDBJ databases">
        <title>Complete sequence of chromosome of Rhodobacter sphaeroides ATCC 17025.</title>
        <authorList>
            <consortium name="US DOE Joint Genome Institute"/>
            <person name="Copeland A."/>
            <person name="Lucas S."/>
            <person name="Lapidus A."/>
            <person name="Barry K."/>
            <person name="Detter J.C."/>
            <person name="Glavina del Rio T."/>
            <person name="Hammon N."/>
            <person name="Israni S."/>
            <person name="Dalin E."/>
            <person name="Tice H."/>
            <person name="Pitluck S."/>
            <person name="Chertkov O."/>
            <person name="Brettin T."/>
            <person name="Bruce D."/>
            <person name="Han C."/>
            <person name="Schmutz J."/>
            <person name="Larimer F."/>
            <person name="Land M."/>
            <person name="Hauser L."/>
            <person name="Kyrpides N."/>
            <person name="Kim E."/>
            <person name="Richardson P."/>
            <person name="Mackenzie C."/>
            <person name="Choudhary M."/>
            <person name="Donohue T.J."/>
            <person name="Kaplan S."/>
        </authorList>
    </citation>
    <scope>NUCLEOTIDE SEQUENCE [LARGE SCALE GENOMIC DNA]</scope>
    <source>
        <strain>ATCC 17025 / ATH 2.4.3</strain>
    </source>
</reference>